<sequence length="181" mass="20221">MKHLVASSILGVFVLTPSLAMMNIRFNHPLYGSFGTQIIHIGAFQGMVSIRDNNIFSEWDGILDYKNALLVAKVFNKMACVLARMDKAVFPSLDDISKALDKQAFKYYPSTRGLTYTVLPSWVKNLAQYGKPIKNMCRDDPTYFAQQQKEGTALAIDSNSCFEIQLLSFMGLFICGETPGL</sequence>
<proteinExistence type="inferred from homology"/>
<protein>
    <recommendedName>
        <fullName>Gastrokine-3</fullName>
    </recommendedName>
</protein>
<reference key="1">
    <citation type="journal article" date="2005" name="Nature">
        <title>Generation and annotation of the DNA sequences of human chromosomes 2 and 4.</title>
        <authorList>
            <person name="Hillier L.W."/>
            <person name="Graves T.A."/>
            <person name="Fulton R.S."/>
            <person name="Fulton L.A."/>
            <person name="Pepin K.H."/>
            <person name="Minx P."/>
            <person name="Wagner-McPherson C."/>
            <person name="Layman D."/>
            <person name="Wylie K."/>
            <person name="Sekhon M."/>
            <person name="Becker M.C."/>
            <person name="Fewell G.A."/>
            <person name="Delehaunty K.D."/>
            <person name="Miner T.L."/>
            <person name="Nash W.E."/>
            <person name="Kremitzki C."/>
            <person name="Oddy L."/>
            <person name="Du H."/>
            <person name="Sun H."/>
            <person name="Bradshaw-Cordum H."/>
            <person name="Ali J."/>
            <person name="Carter J."/>
            <person name="Cordes M."/>
            <person name="Harris A."/>
            <person name="Isak A."/>
            <person name="van Brunt A."/>
            <person name="Nguyen C."/>
            <person name="Du F."/>
            <person name="Courtney L."/>
            <person name="Kalicki J."/>
            <person name="Ozersky P."/>
            <person name="Abbott S."/>
            <person name="Armstrong J."/>
            <person name="Belter E.A."/>
            <person name="Caruso L."/>
            <person name="Cedroni M."/>
            <person name="Cotton M."/>
            <person name="Davidson T."/>
            <person name="Desai A."/>
            <person name="Elliott G."/>
            <person name="Erb T."/>
            <person name="Fronick C."/>
            <person name="Gaige T."/>
            <person name="Haakenson W."/>
            <person name="Haglund K."/>
            <person name="Holmes A."/>
            <person name="Harkins R."/>
            <person name="Kim K."/>
            <person name="Kruchowski S.S."/>
            <person name="Strong C.M."/>
            <person name="Grewal N."/>
            <person name="Goyea E."/>
            <person name="Hou S."/>
            <person name="Levy A."/>
            <person name="Martinka S."/>
            <person name="Mead K."/>
            <person name="McLellan M.D."/>
            <person name="Meyer R."/>
            <person name="Randall-Maher J."/>
            <person name="Tomlinson C."/>
            <person name="Dauphin-Kohlberg S."/>
            <person name="Kozlowicz-Reilly A."/>
            <person name="Shah N."/>
            <person name="Swearengen-Shahid S."/>
            <person name="Snider J."/>
            <person name="Strong J.T."/>
            <person name="Thompson J."/>
            <person name="Yoakum M."/>
            <person name="Leonard S."/>
            <person name="Pearman C."/>
            <person name="Trani L."/>
            <person name="Radionenko M."/>
            <person name="Waligorski J.E."/>
            <person name="Wang C."/>
            <person name="Rock S.M."/>
            <person name="Tin-Wollam A.-M."/>
            <person name="Maupin R."/>
            <person name="Latreille P."/>
            <person name="Wendl M.C."/>
            <person name="Yang S.-P."/>
            <person name="Pohl C."/>
            <person name="Wallis J.W."/>
            <person name="Spieth J."/>
            <person name="Bieri T.A."/>
            <person name="Berkowicz N."/>
            <person name="Nelson J.O."/>
            <person name="Osborne J."/>
            <person name="Ding L."/>
            <person name="Meyer R."/>
            <person name="Sabo A."/>
            <person name="Shotland Y."/>
            <person name="Sinha P."/>
            <person name="Wohldmann P.E."/>
            <person name="Cook L.L."/>
            <person name="Hickenbotham M.T."/>
            <person name="Eldred J."/>
            <person name="Williams D."/>
            <person name="Jones T.A."/>
            <person name="She X."/>
            <person name="Ciccarelli F.D."/>
            <person name="Izaurralde E."/>
            <person name="Taylor J."/>
            <person name="Schmutz J."/>
            <person name="Myers R.M."/>
            <person name="Cox D.R."/>
            <person name="Huang X."/>
            <person name="McPherson J.D."/>
            <person name="Mardis E.R."/>
            <person name="Clifton S.W."/>
            <person name="Warren W.C."/>
            <person name="Chinwalla A.T."/>
            <person name="Eddy S.R."/>
            <person name="Marra M.A."/>
            <person name="Ovcharenko I."/>
            <person name="Furey T.S."/>
            <person name="Miller W."/>
            <person name="Eichler E.E."/>
            <person name="Bork P."/>
            <person name="Suyama M."/>
            <person name="Torrents D."/>
            <person name="Waterston R.H."/>
            <person name="Wilson R.K."/>
        </authorList>
    </citation>
    <scope>NUCLEOTIDE SEQUENCE [LARGE SCALE GENOMIC DNA]</scope>
</reference>
<reference key="2">
    <citation type="journal article" date="2010" name="Gastroenterology">
        <title>A novel gastrokine, Gkn3, marks gastric atrophy and shows evidence of adaptive gene loss in humans.</title>
        <authorList>
            <person name="Menheniott T.R."/>
            <person name="Peterson A.J."/>
            <person name="O'Connor L."/>
            <person name="Lee K.S."/>
            <person name="Kalantzis A."/>
            <person name="Kondova I."/>
            <person name="Bontrop R.E."/>
            <person name="Bell K.M."/>
            <person name="Giraud A.S."/>
        </authorList>
    </citation>
    <scope>IDENTIFICATION</scope>
    <scope>POLYMORPHISM</scope>
</reference>
<keyword id="KW-1015">Disulfide bond</keyword>
<keyword id="KW-1185">Reference proteome</keyword>
<keyword id="KW-0964">Secreted</keyword>
<keyword id="KW-0732">Signal</keyword>
<evidence type="ECO:0000250" key="1"/>
<evidence type="ECO:0000255" key="2"/>
<evidence type="ECO:0000255" key="3">
    <source>
        <dbReference type="PROSITE-ProRule" id="PRU00255"/>
    </source>
</evidence>
<evidence type="ECO:0000269" key="4">
    <source>
    </source>
</evidence>
<evidence type="ECO:0000305" key="5"/>
<organism>
    <name type="scientific">Homo sapiens</name>
    <name type="common">Human</name>
    <dbReference type="NCBI Taxonomy" id="9606"/>
    <lineage>
        <taxon>Eukaryota</taxon>
        <taxon>Metazoa</taxon>
        <taxon>Chordata</taxon>
        <taxon>Craniata</taxon>
        <taxon>Vertebrata</taxon>
        <taxon>Euteleostomi</taxon>
        <taxon>Mammalia</taxon>
        <taxon>Eutheria</taxon>
        <taxon>Euarchontoglires</taxon>
        <taxon>Primates</taxon>
        <taxon>Haplorrhini</taxon>
        <taxon>Catarrhini</taxon>
        <taxon>Hominidae</taxon>
        <taxon>Homo</taxon>
    </lineage>
</organism>
<gene>
    <name type="primary">GKN3P</name>
</gene>
<accession>P0CG01</accession>
<comment type="function">
    <text evidence="1">May inhibit gastric epithelial cell proliferation.</text>
</comment>
<comment type="subcellular location">
    <subcellularLocation>
        <location evidence="1">Secreted</location>
    </subcellularLocation>
</comment>
<comment type="polymorphism">
    <text evidence="4">The most frequent variant has a stop codon instead of Trp-59, triggering nonsense-mediated decay (PubMed:20138039). The variant Trp-59 is rare, except in some populations from Africa (PubMed:20138039).</text>
</comment>
<comment type="similarity">
    <text evidence="5">Belongs to the gastrokine family.</text>
</comment>
<name>GKN3_HUMAN</name>
<dbReference type="EMBL" id="AC097495">
    <property type="status" value="NOT_ANNOTATED_CDS"/>
    <property type="molecule type" value="Genomic_DNA"/>
</dbReference>
<dbReference type="FunCoup" id="P0CG01">
    <property type="interactions" value="202"/>
</dbReference>
<dbReference type="PhosphoSitePlus" id="P0CG01"/>
<dbReference type="BioMuta" id="HGNC:37701"/>
<dbReference type="DMDM" id="298351691"/>
<dbReference type="AGR" id="HGNC:37701"/>
<dbReference type="GeneCards" id="GKN3P"/>
<dbReference type="HGNC" id="HGNC:37701">
    <property type="gene designation" value="GKN3P"/>
</dbReference>
<dbReference type="neXtProt" id="NX_P0CG01"/>
<dbReference type="InParanoid" id="P0CG01"/>
<dbReference type="OrthoDB" id="9445110at2759"/>
<dbReference type="PAN-GO" id="P0CG01">
    <property type="GO annotations" value="2 GO annotations based on evolutionary models"/>
</dbReference>
<dbReference type="PhylomeDB" id="P0CG01"/>
<dbReference type="Pharos" id="P0CG01">
    <property type="development level" value="Tdark"/>
</dbReference>
<dbReference type="PRO" id="PR:P0CG01"/>
<dbReference type="Proteomes" id="UP000005640">
    <property type="component" value="Unplaced"/>
</dbReference>
<dbReference type="RNAct" id="P0CG01">
    <property type="molecule type" value="protein"/>
</dbReference>
<dbReference type="GO" id="GO:0005615">
    <property type="term" value="C:extracellular space"/>
    <property type="evidence" value="ECO:0000318"/>
    <property type="project" value="GO_Central"/>
</dbReference>
<dbReference type="GO" id="GO:0042127">
    <property type="term" value="P:regulation of cell population proliferation"/>
    <property type="evidence" value="ECO:0000318"/>
    <property type="project" value="GO_Central"/>
</dbReference>
<dbReference type="FunFam" id="3.30.390.150:FF:000005">
    <property type="entry name" value="Gastrokine-3"/>
    <property type="match status" value="1"/>
</dbReference>
<dbReference type="Gene3D" id="3.30.390.150">
    <property type="match status" value="1"/>
</dbReference>
<dbReference type="InterPro" id="IPR007084">
    <property type="entry name" value="BRICHOS_dom"/>
</dbReference>
<dbReference type="InterPro" id="IPR051772">
    <property type="entry name" value="Gastrokine"/>
</dbReference>
<dbReference type="PANTHER" id="PTHR16483">
    <property type="entry name" value="GASTROKINE 1"/>
    <property type="match status" value="1"/>
</dbReference>
<dbReference type="Pfam" id="PF04089">
    <property type="entry name" value="BRICHOS"/>
    <property type="match status" value="1"/>
</dbReference>
<dbReference type="SMART" id="SM01039">
    <property type="entry name" value="BRICHOS"/>
    <property type="match status" value="1"/>
</dbReference>
<dbReference type="PROSITE" id="PS50869">
    <property type="entry name" value="BRICHOS"/>
    <property type="match status" value="1"/>
</dbReference>
<feature type="signal peptide" evidence="2">
    <location>
        <begin position="1"/>
        <end position="20"/>
    </location>
</feature>
<feature type="chain" id="PRO_0000394473" description="Gastrokine-3">
    <location>
        <begin position="21"/>
        <end position="181"/>
    </location>
</feature>
<feature type="domain" description="BRICHOS" evidence="3">
    <location>
        <begin position="53"/>
        <end position="145"/>
    </location>
</feature>
<feature type="disulfide bond" evidence="1">
    <location>
        <begin position="80"/>
        <end position="137"/>
    </location>
</feature>